<dbReference type="EMBL" id="AB029452">
    <property type="protein sequence ID" value="BAA89402.1"/>
    <property type="molecule type" value="mRNA"/>
</dbReference>
<dbReference type="RefSeq" id="NP_001258860.1">
    <property type="nucleotide sequence ID" value="NM_001271931.2"/>
</dbReference>
<dbReference type="SMR" id="Q9PTW1"/>
<dbReference type="FunCoup" id="Q9PTW1">
    <property type="interactions" value="105"/>
</dbReference>
<dbReference type="STRING" id="9031.ENSGALP00000071859"/>
<dbReference type="GlyCosmos" id="Q9PTW1">
    <property type="glycosylation" value="1 site, No reported glycans"/>
</dbReference>
<dbReference type="GlyGen" id="Q9PTW1">
    <property type="glycosylation" value="1 site"/>
</dbReference>
<dbReference type="PaxDb" id="9031-ENSGALP00000025843"/>
<dbReference type="GeneID" id="378788"/>
<dbReference type="KEGG" id="gga:378788"/>
<dbReference type="CTD" id="8323"/>
<dbReference type="VEuPathDB" id="HostDB:geneid_378788"/>
<dbReference type="eggNOG" id="KOG3577">
    <property type="taxonomic scope" value="Eukaryota"/>
</dbReference>
<dbReference type="InParanoid" id="Q9PTW1"/>
<dbReference type="OrthoDB" id="10053709at2759"/>
<dbReference type="Proteomes" id="UP000000539">
    <property type="component" value="Unassembled WGS sequence"/>
</dbReference>
<dbReference type="GO" id="GO:0016324">
    <property type="term" value="C:apical plasma membrane"/>
    <property type="evidence" value="ECO:0007669"/>
    <property type="project" value="UniProtKB-SubCell"/>
</dbReference>
<dbReference type="GO" id="GO:0009986">
    <property type="term" value="C:cell surface"/>
    <property type="evidence" value="ECO:0007669"/>
    <property type="project" value="UniProtKB-SubCell"/>
</dbReference>
<dbReference type="GO" id="GO:0030659">
    <property type="term" value="C:cytoplasmic vesicle membrane"/>
    <property type="evidence" value="ECO:0007669"/>
    <property type="project" value="UniProtKB-SubCell"/>
</dbReference>
<dbReference type="GO" id="GO:0004930">
    <property type="term" value="F:G protein-coupled receptor activity"/>
    <property type="evidence" value="ECO:0007669"/>
    <property type="project" value="UniProtKB-KW"/>
</dbReference>
<dbReference type="GO" id="GO:0007399">
    <property type="term" value="P:nervous system development"/>
    <property type="evidence" value="ECO:0007669"/>
    <property type="project" value="UniProtKB-KW"/>
</dbReference>
<dbReference type="GO" id="GO:0016055">
    <property type="term" value="P:Wnt signaling pathway"/>
    <property type="evidence" value="ECO:0007669"/>
    <property type="project" value="UniProtKB-KW"/>
</dbReference>
<dbReference type="Gene3D" id="1.20.1070.10">
    <property type="entry name" value="Rhodopsin 7-helix transmembrane proteins"/>
    <property type="match status" value="1"/>
</dbReference>
<dbReference type="InterPro" id="IPR015526">
    <property type="entry name" value="Frizzled/SFRP"/>
</dbReference>
<dbReference type="InterPro" id="IPR000539">
    <property type="entry name" value="Frizzled/Smoothened_7TM"/>
</dbReference>
<dbReference type="InterPro" id="IPR017981">
    <property type="entry name" value="GPCR_2-like_7TM"/>
</dbReference>
<dbReference type="PANTHER" id="PTHR11309">
    <property type="entry name" value="FRIZZLED"/>
    <property type="match status" value="1"/>
</dbReference>
<dbReference type="PANTHER" id="PTHR11309:SF75">
    <property type="entry name" value="FRIZZLED-6"/>
    <property type="match status" value="1"/>
</dbReference>
<dbReference type="Pfam" id="PF01534">
    <property type="entry name" value="Frizzled"/>
    <property type="match status" value="1"/>
</dbReference>
<dbReference type="PRINTS" id="PR00489">
    <property type="entry name" value="FRIZZLED"/>
</dbReference>
<dbReference type="SMART" id="SM01330">
    <property type="entry name" value="Frizzled"/>
    <property type="match status" value="1"/>
</dbReference>
<dbReference type="PROSITE" id="PS50261">
    <property type="entry name" value="G_PROTEIN_RECEP_F2_4"/>
    <property type="match status" value="1"/>
</dbReference>
<keyword id="KW-1003">Cell membrane</keyword>
<keyword id="KW-0968">Cytoplasmic vesicle</keyword>
<keyword id="KW-0217">Developmental protein</keyword>
<keyword id="KW-0297">G-protein coupled receptor</keyword>
<keyword id="KW-0325">Glycoprotein</keyword>
<keyword id="KW-0472">Membrane</keyword>
<keyword id="KW-0524">Neurogenesis</keyword>
<keyword id="KW-0675">Receptor</keyword>
<keyword id="KW-1185">Reference proteome</keyword>
<keyword id="KW-0807">Transducer</keyword>
<keyword id="KW-0812">Transmembrane</keyword>
<keyword id="KW-1133">Transmembrane helix</keyword>
<keyword id="KW-0879">Wnt signaling pathway</keyword>
<feature type="chain" id="PRO_0000205977" description="Frizzled-6">
    <location>
        <begin position="1" status="less than"/>
        <end position="190" status="greater than"/>
    </location>
</feature>
<feature type="topological domain" description="Extracellular" evidence="3">
    <location>
        <begin position="1" status="less than"/>
        <end position="89"/>
    </location>
</feature>
<feature type="transmembrane region" description="Helical; Name=1" evidence="3">
    <location>
        <begin position="90"/>
        <end position="110"/>
    </location>
</feature>
<feature type="topological domain" description="Cytoplasmic" evidence="3">
    <location>
        <begin position="111"/>
        <end position="121"/>
    </location>
</feature>
<feature type="transmembrane region" description="Helical; Name=2" evidence="3">
    <location>
        <begin position="122"/>
        <end position="142"/>
    </location>
</feature>
<feature type="topological domain" description="Extracellular" evidence="3">
    <location>
        <begin position="143"/>
        <end position="169"/>
    </location>
</feature>
<feature type="transmembrane region" description="Helical; Name=3" evidence="3">
    <location>
        <begin position="170"/>
        <end position="190"/>
    </location>
</feature>
<feature type="domain" description="FZ" evidence="4">
    <location>
        <begin position="1" status="less than"/>
        <end position="20"/>
    </location>
</feature>
<feature type="glycosylation site" description="N-linked (GlcNAc...) asparagine" evidence="3">
    <location>
        <position position="144"/>
    </location>
</feature>
<feature type="non-terminal residue">
    <location>
        <position position="1"/>
    </location>
</feature>
<feature type="non-terminal residue">
    <location>
        <position position="190"/>
    </location>
</feature>
<comment type="function">
    <text evidence="2">Receptor for Wnt proteins. Most of frizzled receptors are coupled to the beta-catenin canonical signaling pathway, which leads to the activation of disheveled proteins, inhibition of GSK-3 kinase, nuclear accumulation of beta-catenin and activation of Wnt target genes. A second signaling pathway involving PKC and calcium fluxes has been seen for some family members, but it is not yet clear if it represents a distinct pathway or if it can be integrated in the canonical pathway, as PKC seems to be required for Wnt-mediated inactivation of GSK-3 kinase. Both pathways seem to involve interactions with G-proteins. Activation by Wnt5A stimulates PKC activity via a G-protein-dependent mechanism. Involved in transduction and intercellular transmission of polarity information during tissue morphogenesis and/or in differentiated tissues. Together with FZD3, may be involved in the neural tube closure and plays a role in the regulation of the establishment of planar cell polarity (PCP), particularly in the orientation of asymmetric bundles of stereocilia on the apical faces of a subset of auditory and vestibular sensory cells located in the inner ear (By similarity).</text>
</comment>
<comment type="subcellular location">
    <subcellularLocation>
        <location evidence="2">Membrane</location>
        <topology evidence="3">Multi-pass membrane protein</topology>
    </subcellularLocation>
    <subcellularLocation>
        <location evidence="2">Cell membrane</location>
        <topology evidence="3">Multi-pass membrane protein</topology>
    </subcellularLocation>
    <subcellularLocation>
        <location evidence="2">Cell surface</location>
    </subcellularLocation>
    <subcellularLocation>
        <location evidence="2">Apical cell membrane</location>
        <topology evidence="3">Multi-pass membrane protein</topology>
    </subcellularLocation>
    <subcellularLocation>
        <location evidence="2">Cytoplasmic vesicle membrane</location>
        <topology evidence="3">Multi-pass membrane protein</topology>
    </subcellularLocation>
</comment>
<comment type="domain">
    <text evidence="1">The FZ domain is involved in binding with Wnt ligands.</text>
</comment>
<comment type="similarity">
    <text evidence="5">Belongs to the G-protein coupled receptor Fz/Smo family.</text>
</comment>
<evidence type="ECO:0000250" key="1"/>
<evidence type="ECO:0000250" key="2">
    <source>
        <dbReference type="UniProtKB" id="Q61089"/>
    </source>
</evidence>
<evidence type="ECO:0000255" key="3"/>
<evidence type="ECO:0000255" key="4">
    <source>
        <dbReference type="PROSITE-ProRule" id="PRU00090"/>
    </source>
</evidence>
<evidence type="ECO:0000305" key="5"/>
<gene>
    <name type="primary">FZD6</name>
    <name type="synonym">FZ6</name>
</gene>
<accession>Q9PTW1</accession>
<organism>
    <name type="scientific">Gallus gallus</name>
    <name type="common">Chicken</name>
    <dbReference type="NCBI Taxonomy" id="9031"/>
    <lineage>
        <taxon>Eukaryota</taxon>
        <taxon>Metazoa</taxon>
        <taxon>Chordata</taxon>
        <taxon>Craniata</taxon>
        <taxon>Vertebrata</taxon>
        <taxon>Euteleostomi</taxon>
        <taxon>Archelosauria</taxon>
        <taxon>Archosauria</taxon>
        <taxon>Dinosauria</taxon>
        <taxon>Saurischia</taxon>
        <taxon>Theropoda</taxon>
        <taxon>Coelurosauria</taxon>
        <taxon>Aves</taxon>
        <taxon>Neognathae</taxon>
        <taxon>Galloanserae</taxon>
        <taxon>Galliformes</taxon>
        <taxon>Phasianidae</taxon>
        <taxon>Phasianinae</taxon>
        <taxon>Gallus</taxon>
    </lineage>
</organism>
<sequence length="190" mass="21622">FGFAWPEELECSRLVNCDETAPATAPVTTNAHGTQKTPGQTRRDYGFWCPRHLHTSNGQGYKFLGIDQCAPPCPNMYFKNYELDVAKSFIGIVSIFCLCATLFTFLTFLIDVKRFRYPERPIIYYSVCYSIVSLMYFIGFLLGNRTACNKADDKLEIGETVVLGSQNKACTVLFMVLYFFTMAGTIWWVI</sequence>
<proteinExistence type="evidence at transcript level"/>
<name>FZD6_CHICK</name>
<protein>
    <recommendedName>
        <fullName>Frizzled-6</fullName>
        <shortName>Fz-6</shortName>
        <shortName>cFz-6</shortName>
    </recommendedName>
</protein>
<reference key="1">
    <citation type="journal article" date="1999" name="Cell. Mol. Biol.">
        <title>Differential expression of the frizzled family involved in Wnt signaling during chick limb development.</title>
        <authorList>
            <person name="Nohno T."/>
            <person name="Kawakami Y."/>
            <person name="Wada N."/>
            <person name="Komaguchi C."/>
            <person name="Nishimatsu S."/>
        </authorList>
    </citation>
    <scope>NUCLEOTIDE SEQUENCE [MRNA]</scope>
    <source>
        <tissue>Limb bud</tissue>
    </source>
</reference>